<comment type="catalytic activity">
    <reaction evidence="1">
        <text>1-(5-phospho-beta-D-ribosyl)-5-[(5-phospho-beta-D-ribosylamino)methylideneamino]imidazole-4-carboxamide = 5-[(5-phospho-1-deoxy-D-ribulos-1-ylimino)methylamino]-1-(5-phospho-beta-D-ribosyl)imidazole-4-carboxamide</text>
        <dbReference type="Rhea" id="RHEA:15469"/>
        <dbReference type="ChEBI" id="CHEBI:58435"/>
        <dbReference type="ChEBI" id="CHEBI:58525"/>
        <dbReference type="EC" id="5.3.1.16"/>
    </reaction>
</comment>
<comment type="pathway">
    <text evidence="1">Amino-acid biosynthesis; L-histidine biosynthesis; L-histidine from 5-phospho-alpha-D-ribose 1-diphosphate: step 4/9.</text>
</comment>
<comment type="subcellular location">
    <subcellularLocation>
        <location evidence="1">Cytoplasm</location>
    </subcellularLocation>
</comment>
<comment type="similarity">
    <text evidence="1">Belongs to the HisA/HisF family.</text>
</comment>
<gene>
    <name evidence="1" type="primary">hisA</name>
    <name type="ordered locus">TERTU_0419</name>
</gene>
<evidence type="ECO:0000255" key="1">
    <source>
        <dbReference type="HAMAP-Rule" id="MF_01014"/>
    </source>
</evidence>
<name>HIS4_TERTT</name>
<feature type="chain" id="PRO_1000213235" description="1-(5-phosphoribosyl)-5-[(5-phosphoribosylamino)methylideneamino] imidazole-4-carboxamide isomerase">
    <location>
        <begin position="1"/>
        <end position="245"/>
    </location>
</feature>
<feature type="active site" description="Proton acceptor" evidence="1">
    <location>
        <position position="8"/>
    </location>
</feature>
<feature type="active site" description="Proton donor" evidence="1">
    <location>
        <position position="130"/>
    </location>
</feature>
<organism>
    <name type="scientific">Teredinibacter turnerae (strain ATCC 39867 / T7901)</name>
    <dbReference type="NCBI Taxonomy" id="377629"/>
    <lineage>
        <taxon>Bacteria</taxon>
        <taxon>Pseudomonadati</taxon>
        <taxon>Pseudomonadota</taxon>
        <taxon>Gammaproteobacteria</taxon>
        <taxon>Cellvibrionales</taxon>
        <taxon>Cellvibrionaceae</taxon>
        <taxon>Teredinibacter</taxon>
    </lineage>
</organism>
<dbReference type="EC" id="5.3.1.16" evidence="1"/>
<dbReference type="EMBL" id="CP001614">
    <property type="protein sequence ID" value="ACR11449.1"/>
    <property type="molecule type" value="Genomic_DNA"/>
</dbReference>
<dbReference type="RefSeq" id="WP_015817561.1">
    <property type="nucleotide sequence ID" value="NC_012997.1"/>
</dbReference>
<dbReference type="SMR" id="C5BMF4"/>
<dbReference type="STRING" id="377629.TERTU_0419"/>
<dbReference type="KEGG" id="ttu:TERTU_0419"/>
<dbReference type="eggNOG" id="COG0106">
    <property type="taxonomic scope" value="Bacteria"/>
</dbReference>
<dbReference type="HOGENOM" id="CLU_048577_1_1_6"/>
<dbReference type="OrthoDB" id="9807749at2"/>
<dbReference type="UniPathway" id="UPA00031">
    <property type="reaction ID" value="UER00009"/>
</dbReference>
<dbReference type="Proteomes" id="UP000009080">
    <property type="component" value="Chromosome"/>
</dbReference>
<dbReference type="GO" id="GO:0005737">
    <property type="term" value="C:cytoplasm"/>
    <property type="evidence" value="ECO:0007669"/>
    <property type="project" value="UniProtKB-SubCell"/>
</dbReference>
<dbReference type="GO" id="GO:0003949">
    <property type="term" value="F:1-(5-phosphoribosyl)-5-[(5-phosphoribosylamino)methylideneamino]imidazole-4-carboxamide isomerase activity"/>
    <property type="evidence" value="ECO:0007669"/>
    <property type="project" value="UniProtKB-UniRule"/>
</dbReference>
<dbReference type="GO" id="GO:0000105">
    <property type="term" value="P:L-histidine biosynthetic process"/>
    <property type="evidence" value="ECO:0007669"/>
    <property type="project" value="UniProtKB-UniRule"/>
</dbReference>
<dbReference type="GO" id="GO:0000162">
    <property type="term" value="P:L-tryptophan biosynthetic process"/>
    <property type="evidence" value="ECO:0007669"/>
    <property type="project" value="TreeGrafter"/>
</dbReference>
<dbReference type="CDD" id="cd04732">
    <property type="entry name" value="HisA"/>
    <property type="match status" value="1"/>
</dbReference>
<dbReference type="FunFam" id="3.20.20.70:FF:000009">
    <property type="entry name" value="1-(5-phosphoribosyl)-5-[(5-phosphoribosylamino)methylideneamino] imidazole-4-carboxamide isomerase"/>
    <property type="match status" value="1"/>
</dbReference>
<dbReference type="Gene3D" id="3.20.20.70">
    <property type="entry name" value="Aldolase class I"/>
    <property type="match status" value="1"/>
</dbReference>
<dbReference type="HAMAP" id="MF_01014">
    <property type="entry name" value="HisA"/>
    <property type="match status" value="1"/>
</dbReference>
<dbReference type="InterPro" id="IPR013785">
    <property type="entry name" value="Aldolase_TIM"/>
</dbReference>
<dbReference type="InterPro" id="IPR006062">
    <property type="entry name" value="His_biosynth"/>
</dbReference>
<dbReference type="InterPro" id="IPR006063">
    <property type="entry name" value="HisA_bact_arch"/>
</dbReference>
<dbReference type="InterPro" id="IPR044524">
    <property type="entry name" value="Isoase_HisA-like"/>
</dbReference>
<dbReference type="InterPro" id="IPR023016">
    <property type="entry name" value="Isoase_HisA-like_bact"/>
</dbReference>
<dbReference type="InterPro" id="IPR011060">
    <property type="entry name" value="RibuloseP-bd_barrel"/>
</dbReference>
<dbReference type="NCBIfam" id="TIGR00007">
    <property type="entry name" value="1-(5-phosphoribosyl)-5-[(5-phosphoribosylamino)methylideneamino]imidazole-4-carboxamide isomerase"/>
    <property type="match status" value="1"/>
</dbReference>
<dbReference type="PANTHER" id="PTHR43090">
    <property type="entry name" value="1-(5-PHOSPHORIBOSYL)-5-[(5-PHOSPHORIBOSYLAMINO)METHYLIDENEAMINO] IMIDAZOLE-4-CARBOXAMIDE ISOMERASE"/>
    <property type="match status" value="1"/>
</dbReference>
<dbReference type="PANTHER" id="PTHR43090:SF2">
    <property type="entry name" value="1-(5-PHOSPHORIBOSYL)-5-[(5-PHOSPHORIBOSYLAMINO)METHYLIDENEAMINO] IMIDAZOLE-4-CARBOXAMIDE ISOMERASE"/>
    <property type="match status" value="1"/>
</dbReference>
<dbReference type="Pfam" id="PF00977">
    <property type="entry name" value="His_biosynth"/>
    <property type="match status" value="1"/>
</dbReference>
<dbReference type="SUPFAM" id="SSF51366">
    <property type="entry name" value="Ribulose-phoshate binding barrel"/>
    <property type="match status" value="1"/>
</dbReference>
<keyword id="KW-0028">Amino-acid biosynthesis</keyword>
<keyword id="KW-0963">Cytoplasm</keyword>
<keyword id="KW-0368">Histidine biosynthesis</keyword>
<keyword id="KW-0413">Isomerase</keyword>
<keyword id="KW-1185">Reference proteome</keyword>
<protein>
    <recommendedName>
        <fullName evidence="1">1-(5-phosphoribosyl)-5-[(5-phosphoribosylamino)methylideneamino] imidazole-4-carboxamide isomerase</fullName>
        <ecNumber evidence="1">5.3.1.16</ecNumber>
    </recommendedName>
    <alternativeName>
        <fullName evidence="1">Phosphoribosylformimino-5-aminoimidazole carboxamide ribotide isomerase</fullName>
    </alternativeName>
</protein>
<reference key="1">
    <citation type="journal article" date="2009" name="PLoS ONE">
        <title>The complete genome of Teredinibacter turnerae T7901: an intracellular endosymbiont of marine wood-boring bivalves (shipworms).</title>
        <authorList>
            <person name="Yang J.C."/>
            <person name="Madupu R."/>
            <person name="Durkin A.S."/>
            <person name="Ekborg N.A."/>
            <person name="Pedamallu C.S."/>
            <person name="Hostetler J.B."/>
            <person name="Radune D."/>
            <person name="Toms B.S."/>
            <person name="Henrissat B."/>
            <person name="Coutinho P.M."/>
            <person name="Schwarz S."/>
            <person name="Field L."/>
            <person name="Trindade-Silva A.E."/>
            <person name="Soares C.A.G."/>
            <person name="Elshahawi S."/>
            <person name="Hanora A."/>
            <person name="Schmidt E.W."/>
            <person name="Haygood M.G."/>
            <person name="Posfai J."/>
            <person name="Benner J."/>
            <person name="Madinger C."/>
            <person name="Nove J."/>
            <person name="Anton B."/>
            <person name="Chaudhary K."/>
            <person name="Foster J."/>
            <person name="Holman A."/>
            <person name="Kumar S."/>
            <person name="Lessard P.A."/>
            <person name="Luyten Y.A."/>
            <person name="Slatko B."/>
            <person name="Wood N."/>
            <person name="Wu B."/>
            <person name="Teplitski M."/>
            <person name="Mougous J.D."/>
            <person name="Ward N."/>
            <person name="Eisen J.A."/>
            <person name="Badger J.H."/>
            <person name="Distel D.L."/>
        </authorList>
    </citation>
    <scope>NUCLEOTIDE SEQUENCE [LARGE SCALE GENOMIC DNA]</scope>
    <source>
        <strain>ATCC 39867 / T7901</strain>
    </source>
</reference>
<sequence length="245" mass="25870">MLIIPAIDLKDGNCVRLRQGLMDDSTVFGEDPVAFARQWVDKGARRLHLVDLNGAFAGKPVNGDVVTAIAKAFPELPIQIGGGIRSAETIEHYLQAGVNYVIIGTKAVKEPEFVTEMCKQFAGHIIVGLDAKNGFVATDGWAEVSEVKATDLAARFASDGVTEIVYTDIARDGMMQGVNVEATVDMAKASPIPVIASGGITDMNDIRALAKVASAGISGAITGRAIYEGTLDIVEAQAYCDIVSD</sequence>
<accession>C5BMF4</accession>
<proteinExistence type="inferred from homology"/>